<name>COFH_METTH</name>
<organism>
    <name type="scientific">Methanothermobacter thermautotrophicus (strain ATCC 29096 / DSM 1053 / JCM 10044 / NBRC 100330 / Delta H)</name>
    <name type="common">Methanobacterium thermoautotrophicum</name>
    <dbReference type="NCBI Taxonomy" id="187420"/>
    <lineage>
        <taxon>Archaea</taxon>
        <taxon>Methanobacteriati</taxon>
        <taxon>Methanobacteriota</taxon>
        <taxon>Methanomada group</taxon>
        <taxon>Methanobacteria</taxon>
        <taxon>Methanobacteriales</taxon>
        <taxon>Methanobacteriaceae</taxon>
        <taxon>Methanothermobacter</taxon>
    </lineage>
</organism>
<gene>
    <name evidence="1" type="primary">cofH</name>
    <name type="ordered locus">MTH_820</name>
</gene>
<sequence>MNIKTRTKKILQKAMDEPITKEEALYLMGVTGRDLQALMIAADMVREAEAGDRITYIENWNINFTNICSGQCGFCAFKRDAADGDSYYLETERILEIAAEAIEKGARELCIQGGLYPGLDTYFYEDLIRAIKSEFPDVHLHSFSPMEVYYGAQNAELTVEEALKILKRAGLGSMPGTAAEILDDDVRAVICPTKLSTGEWVEVIETAHRVGIPTTCTMMYGHIDGPEHRVEHMDILRRIQEKTGGFTEFVPLPFMHPHAPIYREGLAMPGATGADDLKVYAISRLMFRGLIENIQASWVKLGFKFAQVALLSGANDIGGTLGEENISKSAGASHGVRTEPEEIIRVVRDIGRIPARRDTLYREIEDV</sequence>
<keyword id="KW-0004">4Fe-4S</keyword>
<keyword id="KW-0408">Iron</keyword>
<keyword id="KW-0411">Iron-sulfur</keyword>
<keyword id="KW-0479">Metal-binding</keyword>
<keyword id="KW-1185">Reference proteome</keyword>
<keyword id="KW-0949">S-adenosyl-L-methionine</keyword>
<keyword id="KW-0808">Transferase</keyword>
<feature type="chain" id="PRO_0000141724" description="5-amino-6-(D-ribitylamino)uracil--L-tyrosine 4-hydroxyphenyl transferase">
    <location>
        <begin position="1"/>
        <end position="367"/>
    </location>
</feature>
<feature type="domain" description="Radical SAM core" evidence="2">
    <location>
        <begin position="54"/>
        <end position="288"/>
    </location>
</feature>
<feature type="binding site" evidence="1">
    <location>
        <position position="68"/>
    </location>
    <ligand>
        <name>[4Fe-4S] cluster</name>
        <dbReference type="ChEBI" id="CHEBI:49883"/>
        <note>4Fe-4S-S-AdoMet</note>
    </ligand>
</feature>
<feature type="binding site" evidence="1">
    <location>
        <position position="72"/>
    </location>
    <ligand>
        <name>[4Fe-4S] cluster</name>
        <dbReference type="ChEBI" id="CHEBI:49883"/>
        <note>4Fe-4S-S-AdoMet</note>
    </ligand>
</feature>
<feature type="binding site" evidence="1">
    <location>
        <position position="75"/>
    </location>
    <ligand>
        <name>[4Fe-4S] cluster</name>
        <dbReference type="ChEBI" id="CHEBI:49883"/>
        <note>4Fe-4S-S-AdoMet</note>
    </ligand>
</feature>
<reference key="1">
    <citation type="journal article" date="1997" name="J. Bacteriol.">
        <title>Complete genome sequence of Methanobacterium thermoautotrophicum deltaH: functional analysis and comparative genomics.</title>
        <authorList>
            <person name="Smith D.R."/>
            <person name="Doucette-Stamm L.A."/>
            <person name="Deloughery C."/>
            <person name="Lee H.-M."/>
            <person name="Dubois J."/>
            <person name="Aldredge T."/>
            <person name="Bashirzadeh R."/>
            <person name="Blakely D."/>
            <person name="Cook R."/>
            <person name="Gilbert K."/>
            <person name="Harrison D."/>
            <person name="Hoang L."/>
            <person name="Keagle P."/>
            <person name="Lumm W."/>
            <person name="Pothier B."/>
            <person name="Qiu D."/>
            <person name="Spadafora R."/>
            <person name="Vicare R."/>
            <person name="Wang Y."/>
            <person name="Wierzbowski J."/>
            <person name="Gibson R."/>
            <person name="Jiwani N."/>
            <person name="Caruso A."/>
            <person name="Bush D."/>
            <person name="Safer H."/>
            <person name="Patwell D."/>
            <person name="Prabhakar S."/>
            <person name="McDougall S."/>
            <person name="Shimer G."/>
            <person name="Goyal A."/>
            <person name="Pietrovski S."/>
            <person name="Church G.M."/>
            <person name="Daniels C.J."/>
            <person name="Mao J.-I."/>
            <person name="Rice P."/>
            <person name="Noelling J."/>
            <person name="Reeve J.N."/>
        </authorList>
    </citation>
    <scope>NUCLEOTIDE SEQUENCE [LARGE SCALE GENOMIC DNA]</scope>
    <source>
        <strain>ATCC 29096 / DSM 1053 / JCM 10044 / NBRC 100330 / Delta H</strain>
    </source>
</reference>
<evidence type="ECO:0000255" key="1">
    <source>
        <dbReference type="HAMAP-Rule" id="MF_01612"/>
    </source>
</evidence>
<evidence type="ECO:0000255" key="2">
    <source>
        <dbReference type="PROSITE-ProRule" id="PRU01266"/>
    </source>
</evidence>
<evidence type="ECO:0000305" key="3"/>
<comment type="function">
    <text evidence="1">Catalyzes the radical-mediated synthesis of 5-amino-5-(4-hydroxybenzyl)-6-(D-ribitylimino)-5,6-dihydrouracil from 5-amino-6-(D-ribitylamino)uracil and L-tyrosine.</text>
</comment>
<comment type="catalytic activity">
    <reaction evidence="1">
        <text>5-amino-6-(D-ribitylamino)uracil + L-tyrosine + S-adenosyl-L-methionine = 5-amino-5-(4-hydroxybenzyl)-6-(D-ribitylimino)-5,6-dihydrouracil + 2-iminoacetate + 5'-deoxyadenosine + L-methionine + H(+)</text>
        <dbReference type="Rhea" id="RHEA:55200"/>
        <dbReference type="ChEBI" id="CHEBI:15378"/>
        <dbReference type="ChEBI" id="CHEBI:15934"/>
        <dbReference type="ChEBI" id="CHEBI:17319"/>
        <dbReference type="ChEBI" id="CHEBI:57844"/>
        <dbReference type="ChEBI" id="CHEBI:58315"/>
        <dbReference type="ChEBI" id="CHEBI:59789"/>
        <dbReference type="ChEBI" id="CHEBI:77846"/>
        <dbReference type="ChEBI" id="CHEBI:85936"/>
        <dbReference type="EC" id="2.5.1.147"/>
    </reaction>
</comment>
<comment type="cofactor">
    <cofactor evidence="1">
        <name>[4Fe-4S] cluster</name>
        <dbReference type="ChEBI" id="CHEBI:49883"/>
    </cofactor>
    <text evidence="1">Binds 1 [4Fe-4S] cluster. The cluster is coordinated with 3 cysteines and an exchangeable S-adenosyl-L-methionine.</text>
</comment>
<comment type="pathway">
    <text evidence="1">Cofactor biosynthesis; coenzyme F0 biosynthesis.</text>
</comment>
<comment type="subunit">
    <text evidence="1">Consists of two subunits, CofG and CofH.</text>
</comment>
<comment type="similarity">
    <text evidence="1">Belongs to the radical SAM superfamily. CofH family.</text>
</comment>
<comment type="sequence caution" evidence="3">
    <conflict type="erroneous initiation">
        <sequence resource="EMBL-CDS" id="AAB85320"/>
    </conflict>
</comment>
<protein>
    <recommendedName>
        <fullName evidence="1">5-amino-6-(D-ribitylamino)uracil--L-tyrosine 4-hydroxyphenyl transferase</fullName>
        <ecNumber evidence="1">2.5.1.147</ecNumber>
    </recommendedName>
    <alternativeName>
        <fullName evidence="1">FO synthase subunit 2</fullName>
    </alternativeName>
</protein>
<dbReference type="EC" id="2.5.1.147" evidence="1"/>
<dbReference type="EMBL" id="AE000666">
    <property type="protein sequence ID" value="AAB85320.1"/>
    <property type="status" value="ALT_INIT"/>
    <property type="molecule type" value="Genomic_DNA"/>
</dbReference>
<dbReference type="PIR" id="F69209">
    <property type="entry name" value="F69209"/>
</dbReference>
<dbReference type="SMR" id="O26911"/>
<dbReference type="FunCoup" id="O26911">
    <property type="interactions" value="90"/>
</dbReference>
<dbReference type="STRING" id="187420.MTH_820"/>
<dbReference type="PaxDb" id="187420-MTH_820"/>
<dbReference type="EnsemblBacteria" id="AAB85320">
    <property type="protein sequence ID" value="AAB85320"/>
    <property type="gene ID" value="MTH_820"/>
</dbReference>
<dbReference type="KEGG" id="mth:MTH_820"/>
<dbReference type="PATRIC" id="fig|187420.15.peg.805"/>
<dbReference type="HOGENOM" id="CLU_040406_1_0_2"/>
<dbReference type="InParanoid" id="O26911"/>
<dbReference type="UniPathway" id="UPA00072"/>
<dbReference type="Proteomes" id="UP000005223">
    <property type="component" value="Chromosome"/>
</dbReference>
<dbReference type="GO" id="GO:0051539">
    <property type="term" value="F:4 iron, 4 sulfur cluster binding"/>
    <property type="evidence" value="ECO:0007669"/>
    <property type="project" value="UniProtKB-KW"/>
</dbReference>
<dbReference type="GO" id="GO:0141093">
    <property type="term" value="F:5-amino-6-(D-ribitylamino)uracil--L-tyrosine 4-hydroxyphenyl transferase activity"/>
    <property type="evidence" value="ECO:0007669"/>
    <property type="project" value="UniProtKB-EC"/>
</dbReference>
<dbReference type="GO" id="GO:0044689">
    <property type="term" value="F:7,8-didemethyl-8-hydroxy-5-deazariboflavin synthase activity"/>
    <property type="evidence" value="ECO:0007669"/>
    <property type="project" value="TreeGrafter"/>
</dbReference>
<dbReference type="GO" id="GO:0005506">
    <property type="term" value="F:iron ion binding"/>
    <property type="evidence" value="ECO:0007669"/>
    <property type="project" value="UniProtKB-UniRule"/>
</dbReference>
<dbReference type="CDD" id="cd01335">
    <property type="entry name" value="Radical_SAM"/>
    <property type="match status" value="1"/>
</dbReference>
<dbReference type="FunFam" id="3.20.20.70:FF:000134">
    <property type="entry name" value="7,8-didemethyl-8-hydroxy-5-deazariboflavin synthase"/>
    <property type="match status" value="1"/>
</dbReference>
<dbReference type="Gene3D" id="3.20.20.70">
    <property type="entry name" value="Aldolase class I"/>
    <property type="match status" value="1"/>
</dbReference>
<dbReference type="HAMAP" id="MF_01612">
    <property type="entry name" value="FO_synth_sub2"/>
    <property type="match status" value="1"/>
</dbReference>
<dbReference type="InterPro" id="IPR013785">
    <property type="entry name" value="Aldolase_TIM"/>
</dbReference>
<dbReference type="InterPro" id="IPR045567">
    <property type="entry name" value="CofH/MnqC-like_C"/>
</dbReference>
<dbReference type="InterPro" id="IPR019940">
    <property type="entry name" value="CofH_family"/>
</dbReference>
<dbReference type="InterPro" id="IPR006638">
    <property type="entry name" value="Elp3/MiaA/NifB-like_rSAM"/>
</dbReference>
<dbReference type="InterPro" id="IPR034405">
    <property type="entry name" value="F420"/>
</dbReference>
<dbReference type="InterPro" id="IPR020050">
    <property type="entry name" value="FO_synthase_su2"/>
</dbReference>
<dbReference type="InterPro" id="IPR007197">
    <property type="entry name" value="rSAM"/>
</dbReference>
<dbReference type="NCBIfam" id="TIGR00423">
    <property type="entry name" value="CofH family radical SAM protein"/>
    <property type="match status" value="1"/>
</dbReference>
<dbReference type="NCBIfam" id="TIGR03551">
    <property type="entry name" value="F420_cofH"/>
    <property type="match status" value="1"/>
</dbReference>
<dbReference type="NCBIfam" id="NF005609">
    <property type="entry name" value="PRK07360.1"/>
    <property type="match status" value="1"/>
</dbReference>
<dbReference type="PANTHER" id="PTHR43076">
    <property type="entry name" value="FO SYNTHASE (COFH)"/>
    <property type="match status" value="1"/>
</dbReference>
<dbReference type="PANTHER" id="PTHR43076:SF1">
    <property type="entry name" value="LIPOYL SYNTHASE 2"/>
    <property type="match status" value="1"/>
</dbReference>
<dbReference type="Pfam" id="PF19288">
    <property type="entry name" value="CofH_C"/>
    <property type="match status" value="1"/>
</dbReference>
<dbReference type="Pfam" id="PF04055">
    <property type="entry name" value="Radical_SAM"/>
    <property type="match status" value="1"/>
</dbReference>
<dbReference type="PIRSF" id="PIRSF004762">
    <property type="entry name" value="CHP00423"/>
    <property type="match status" value="1"/>
</dbReference>
<dbReference type="SFLD" id="SFLDF00293">
    <property type="entry name" value="((2_3_4_5-tetrahydroxypentyl)a"/>
    <property type="match status" value="1"/>
</dbReference>
<dbReference type="SFLD" id="SFLDF00343">
    <property type="entry name" value="aminofutalosine_synthase_(mqnE"/>
    <property type="match status" value="1"/>
</dbReference>
<dbReference type="SFLD" id="SFLDF00342">
    <property type="entry name" value="cyclic_dehypoxanthine_futalosi"/>
    <property type="match status" value="1"/>
</dbReference>
<dbReference type="SFLD" id="SFLDS00029">
    <property type="entry name" value="Radical_SAM"/>
    <property type="match status" value="1"/>
</dbReference>
<dbReference type="SMART" id="SM00729">
    <property type="entry name" value="Elp3"/>
    <property type="match status" value="1"/>
</dbReference>
<dbReference type="SUPFAM" id="SSF102114">
    <property type="entry name" value="Radical SAM enzymes"/>
    <property type="match status" value="1"/>
</dbReference>
<dbReference type="PROSITE" id="PS51918">
    <property type="entry name" value="RADICAL_SAM"/>
    <property type="match status" value="1"/>
</dbReference>
<proteinExistence type="inferred from homology"/>
<accession>O26911</accession>